<proteinExistence type="inferred from homology"/>
<accession>Q0SQ51</accession>
<sequence>MKDVVLVKSLYRNTSEYSDKKVKISGWIRTLRASNAFGFIEVNDGSFFKNVQVVFDSAKISNYKEISKLPISSSISVIGTLVETPDSKQPFEIQAEEIIVEGMSDSDYPLQKKRHTFEYLRTIAHLRPRSNAFSATFRVRSVAAYAIHKFFQDQGFVYTHTPILTGSDCEGAGEMFRVTTLDMMAPPISEEGGIDFSQDFFGKETNLTVSGQLNAECFALAFRNIYTFGPTFRAENSNTVKHAAEFWMIEPEMAFADLIDDMEVAENMLKYVIKYVMDECPEEIAFFNQFVDKGLLERLNHVVNSEFGKVTYTEAVKLLQESGKEFEYPVEWGIDLQTEHERYLTEQIFKKPVFVTDYPKDIKAFYMRLNEDGKTVAAMDCLVPGIGEIIGGSQREERLDVLKARMAELNLNEEDYWWYLELRKYGETVHSGFGLGFERLIMYITGMANIRDVIPFPRTTGTAEF</sequence>
<evidence type="ECO:0000255" key="1">
    <source>
        <dbReference type="HAMAP-Rule" id="MF_00534"/>
    </source>
</evidence>
<reference key="1">
    <citation type="journal article" date="2006" name="Genome Res.">
        <title>Skewed genomic variability in strains of the toxigenic bacterial pathogen, Clostridium perfringens.</title>
        <authorList>
            <person name="Myers G.S.A."/>
            <person name="Rasko D.A."/>
            <person name="Cheung J.K."/>
            <person name="Ravel J."/>
            <person name="Seshadri R."/>
            <person name="DeBoy R.T."/>
            <person name="Ren Q."/>
            <person name="Varga J."/>
            <person name="Awad M.M."/>
            <person name="Brinkac L.M."/>
            <person name="Daugherty S.C."/>
            <person name="Haft D.H."/>
            <person name="Dodson R.J."/>
            <person name="Madupu R."/>
            <person name="Nelson W.C."/>
            <person name="Rosovitz M.J."/>
            <person name="Sullivan S.A."/>
            <person name="Khouri H."/>
            <person name="Dimitrov G.I."/>
            <person name="Watkins K.L."/>
            <person name="Mulligan S."/>
            <person name="Benton J."/>
            <person name="Radune D."/>
            <person name="Fisher D.J."/>
            <person name="Atkins H.S."/>
            <person name="Hiscox T."/>
            <person name="Jost B.H."/>
            <person name="Billington S.J."/>
            <person name="Songer J.G."/>
            <person name="McClane B.A."/>
            <person name="Titball R.W."/>
            <person name="Rood J.I."/>
            <person name="Melville S.B."/>
            <person name="Paulsen I.T."/>
        </authorList>
    </citation>
    <scope>NUCLEOTIDE SEQUENCE [LARGE SCALE GENOMIC DNA]</scope>
    <source>
        <strain>SM101 / Type A</strain>
    </source>
</reference>
<name>SYN_CLOPS</name>
<feature type="chain" id="PRO_1000128207" description="Asparagine--tRNA ligase">
    <location>
        <begin position="1"/>
        <end position="465"/>
    </location>
</feature>
<protein>
    <recommendedName>
        <fullName evidence="1">Asparagine--tRNA ligase</fullName>
        <ecNumber evidence="1">6.1.1.22</ecNumber>
    </recommendedName>
    <alternativeName>
        <fullName evidence="1">Asparaginyl-tRNA synthetase</fullName>
        <shortName evidence="1">AsnRS</shortName>
    </alternativeName>
</protein>
<gene>
    <name evidence="1" type="primary">asnS</name>
    <name type="ordered locus">CPR_2509</name>
</gene>
<dbReference type="EC" id="6.1.1.22" evidence="1"/>
<dbReference type="EMBL" id="CP000312">
    <property type="protein sequence ID" value="ABG85590.1"/>
    <property type="molecule type" value="Genomic_DNA"/>
</dbReference>
<dbReference type="RefSeq" id="WP_011593202.1">
    <property type="nucleotide sequence ID" value="NC_008262.1"/>
</dbReference>
<dbReference type="SMR" id="Q0SQ51"/>
<dbReference type="KEGG" id="cpr:CPR_2509"/>
<dbReference type="Proteomes" id="UP000001824">
    <property type="component" value="Chromosome"/>
</dbReference>
<dbReference type="GO" id="GO:0005737">
    <property type="term" value="C:cytoplasm"/>
    <property type="evidence" value="ECO:0007669"/>
    <property type="project" value="UniProtKB-SubCell"/>
</dbReference>
<dbReference type="GO" id="GO:0004816">
    <property type="term" value="F:asparagine-tRNA ligase activity"/>
    <property type="evidence" value="ECO:0007669"/>
    <property type="project" value="UniProtKB-UniRule"/>
</dbReference>
<dbReference type="GO" id="GO:0005524">
    <property type="term" value="F:ATP binding"/>
    <property type="evidence" value="ECO:0007669"/>
    <property type="project" value="UniProtKB-UniRule"/>
</dbReference>
<dbReference type="GO" id="GO:0140096">
    <property type="term" value="F:catalytic activity, acting on a protein"/>
    <property type="evidence" value="ECO:0007669"/>
    <property type="project" value="UniProtKB-ARBA"/>
</dbReference>
<dbReference type="GO" id="GO:0003676">
    <property type="term" value="F:nucleic acid binding"/>
    <property type="evidence" value="ECO:0007669"/>
    <property type="project" value="InterPro"/>
</dbReference>
<dbReference type="GO" id="GO:0016740">
    <property type="term" value="F:transferase activity"/>
    <property type="evidence" value="ECO:0007669"/>
    <property type="project" value="UniProtKB-ARBA"/>
</dbReference>
<dbReference type="GO" id="GO:0006421">
    <property type="term" value="P:asparaginyl-tRNA aminoacylation"/>
    <property type="evidence" value="ECO:0007669"/>
    <property type="project" value="UniProtKB-UniRule"/>
</dbReference>
<dbReference type="CDD" id="cd00776">
    <property type="entry name" value="AsxRS_core"/>
    <property type="match status" value="1"/>
</dbReference>
<dbReference type="CDD" id="cd04318">
    <property type="entry name" value="EcAsnRS_like_N"/>
    <property type="match status" value="1"/>
</dbReference>
<dbReference type="FunFam" id="3.30.930.10:FF:000016">
    <property type="entry name" value="Asparagine--tRNA ligase"/>
    <property type="match status" value="1"/>
</dbReference>
<dbReference type="Gene3D" id="3.30.930.10">
    <property type="entry name" value="Bira Bifunctional Protein, Domain 2"/>
    <property type="match status" value="1"/>
</dbReference>
<dbReference type="Gene3D" id="2.40.50.140">
    <property type="entry name" value="Nucleic acid-binding proteins"/>
    <property type="match status" value="1"/>
</dbReference>
<dbReference type="HAMAP" id="MF_00534">
    <property type="entry name" value="Asn_tRNA_synth"/>
    <property type="match status" value="1"/>
</dbReference>
<dbReference type="InterPro" id="IPR004364">
    <property type="entry name" value="Aa-tRNA-synt_II"/>
</dbReference>
<dbReference type="InterPro" id="IPR006195">
    <property type="entry name" value="aa-tRNA-synth_II"/>
</dbReference>
<dbReference type="InterPro" id="IPR045864">
    <property type="entry name" value="aa-tRNA-synth_II/BPL/LPL"/>
</dbReference>
<dbReference type="InterPro" id="IPR004522">
    <property type="entry name" value="Asn-tRNA-ligase"/>
</dbReference>
<dbReference type="InterPro" id="IPR002312">
    <property type="entry name" value="Asp/Asn-tRNA-synth_IIb"/>
</dbReference>
<dbReference type="InterPro" id="IPR012340">
    <property type="entry name" value="NA-bd_OB-fold"/>
</dbReference>
<dbReference type="InterPro" id="IPR004365">
    <property type="entry name" value="NA-bd_OB_tRNA"/>
</dbReference>
<dbReference type="NCBIfam" id="TIGR00457">
    <property type="entry name" value="asnS"/>
    <property type="match status" value="1"/>
</dbReference>
<dbReference type="NCBIfam" id="NF003037">
    <property type="entry name" value="PRK03932.1"/>
    <property type="match status" value="1"/>
</dbReference>
<dbReference type="PANTHER" id="PTHR22594:SF34">
    <property type="entry name" value="ASPARAGINE--TRNA LIGASE, MITOCHONDRIAL-RELATED"/>
    <property type="match status" value="1"/>
</dbReference>
<dbReference type="PANTHER" id="PTHR22594">
    <property type="entry name" value="ASPARTYL/LYSYL-TRNA SYNTHETASE"/>
    <property type="match status" value="1"/>
</dbReference>
<dbReference type="Pfam" id="PF00152">
    <property type="entry name" value="tRNA-synt_2"/>
    <property type="match status" value="1"/>
</dbReference>
<dbReference type="Pfam" id="PF01336">
    <property type="entry name" value="tRNA_anti-codon"/>
    <property type="match status" value="1"/>
</dbReference>
<dbReference type="PRINTS" id="PR01042">
    <property type="entry name" value="TRNASYNTHASP"/>
</dbReference>
<dbReference type="SUPFAM" id="SSF55681">
    <property type="entry name" value="Class II aaRS and biotin synthetases"/>
    <property type="match status" value="1"/>
</dbReference>
<dbReference type="SUPFAM" id="SSF50249">
    <property type="entry name" value="Nucleic acid-binding proteins"/>
    <property type="match status" value="1"/>
</dbReference>
<dbReference type="PROSITE" id="PS50862">
    <property type="entry name" value="AA_TRNA_LIGASE_II"/>
    <property type="match status" value="1"/>
</dbReference>
<comment type="catalytic activity">
    <reaction evidence="1">
        <text>tRNA(Asn) + L-asparagine + ATP = L-asparaginyl-tRNA(Asn) + AMP + diphosphate + H(+)</text>
        <dbReference type="Rhea" id="RHEA:11180"/>
        <dbReference type="Rhea" id="RHEA-COMP:9659"/>
        <dbReference type="Rhea" id="RHEA-COMP:9674"/>
        <dbReference type="ChEBI" id="CHEBI:15378"/>
        <dbReference type="ChEBI" id="CHEBI:30616"/>
        <dbReference type="ChEBI" id="CHEBI:33019"/>
        <dbReference type="ChEBI" id="CHEBI:58048"/>
        <dbReference type="ChEBI" id="CHEBI:78442"/>
        <dbReference type="ChEBI" id="CHEBI:78515"/>
        <dbReference type="ChEBI" id="CHEBI:456215"/>
        <dbReference type="EC" id="6.1.1.22"/>
    </reaction>
</comment>
<comment type="subunit">
    <text evidence="1">Homodimer.</text>
</comment>
<comment type="subcellular location">
    <subcellularLocation>
        <location evidence="1">Cytoplasm</location>
    </subcellularLocation>
</comment>
<comment type="similarity">
    <text evidence="1">Belongs to the class-II aminoacyl-tRNA synthetase family.</text>
</comment>
<keyword id="KW-0030">Aminoacyl-tRNA synthetase</keyword>
<keyword id="KW-0067">ATP-binding</keyword>
<keyword id="KW-0963">Cytoplasm</keyword>
<keyword id="KW-0436">Ligase</keyword>
<keyword id="KW-0547">Nucleotide-binding</keyword>
<keyword id="KW-0648">Protein biosynthesis</keyword>
<organism>
    <name type="scientific">Clostridium perfringens (strain SM101 / Type A)</name>
    <dbReference type="NCBI Taxonomy" id="289380"/>
    <lineage>
        <taxon>Bacteria</taxon>
        <taxon>Bacillati</taxon>
        <taxon>Bacillota</taxon>
        <taxon>Clostridia</taxon>
        <taxon>Eubacteriales</taxon>
        <taxon>Clostridiaceae</taxon>
        <taxon>Clostridium</taxon>
    </lineage>
</organism>